<keyword id="KW-0027">Amidation</keyword>
<keyword id="KW-1015">Disulfide bond</keyword>
<keyword id="KW-0301">Gamma-carboxyglutamic acid</keyword>
<keyword id="KW-0379">Hydroxylation</keyword>
<keyword id="KW-0872">Ion channel impairing toxin</keyword>
<keyword id="KW-0528">Neurotoxin</keyword>
<keyword id="KW-0964">Secreted</keyword>
<keyword id="KW-0732">Signal</keyword>
<keyword id="KW-0800">Toxin</keyword>
<keyword id="KW-0738">Voltage-gated sodium channel impairing toxin</keyword>
<protein>
    <recommendedName>
        <fullName>Mu-conotoxin-like T3.1</fullName>
    </recommendedName>
</protein>
<dbReference type="GO" id="GO:0005576">
    <property type="term" value="C:extracellular region"/>
    <property type="evidence" value="ECO:0007669"/>
    <property type="project" value="UniProtKB-SubCell"/>
</dbReference>
<dbReference type="GO" id="GO:0008200">
    <property type="term" value="F:ion channel inhibitor activity"/>
    <property type="evidence" value="ECO:0007669"/>
    <property type="project" value="InterPro"/>
</dbReference>
<dbReference type="GO" id="GO:0017080">
    <property type="term" value="F:sodium channel regulator activity"/>
    <property type="evidence" value="ECO:0007669"/>
    <property type="project" value="UniProtKB-KW"/>
</dbReference>
<dbReference type="GO" id="GO:0090729">
    <property type="term" value="F:toxin activity"/>
    <property type="evidence" value="ECO:0007669"/>
    <property type="project" value="UniProtKB-KW"/>
</dbReference>
<dbReference type="InterPro" id="IPR004214">
    <property type="entry name" value="Conotoxin"/>
</dbReference>
<dbReference type="Pfam" id="PF02950">
    <property type="entry name" value="Conotoxin"/>
    <property type="match status" value="1"/>
</dbReference>
<organism>
    <name type="scientific">Conus tulipa</name>
    <name type="common">Fish-hunting cone snail</name>
    <name type="synonym">Tulip cone</name>
    <dbReference type="NCBI Taxonomy" id="6495"/>
    <lineage>
        <taxon>Eukaryota</taxon>
        <taxon>Metazoa</taxon>
        <taxon>Spiralia</taxon>
        <taxon>Lophotrochozoa</taxon>
        <taxon>Mollusca</taxon>
        <taxon>Gastropoda</taxon>
        <taxon>Caenogastropoda</taxon>
        <taxon>Neogastropoda</taxon>
        <taxon>Conoidea</taxon>
        <taxon>Conidae</taxon>
        <taxon>Conus</taxon>
        <taxon>Gastridium</taxon>
    </lineage>
</organism>
<feature type="signal peptide" evidence="4">
    <location>
        <begin position="1"/>
        <end position="19"/>
    </location>
</feature>
<feature type="propeptide" id="PRO_0000419898" evidence="1">
    <location>
        <begin position="20"/>
        <end position="74"/>
    </location>
</feature>
<feature type="peptide" id="PRO_0000419899" description="Mu-conotoxin-like T3.1">
    <location>
        <begin position="51"/>
        <end position="71"/>
    </location>
</feature>
<feature type="modified residue" description="4-hydroxyproline" evidence="1">
    <location>
        <position position="57"/>
    </location>
</feature>
<feature type="modified residue" description="4-carboxyglutamate" evidence="1">
    <location>
        <position position="58"/>
    </location>
</feature>
<feature type="modified residue" description="4-carboxyglutamate" evidence="1">
    <location>
        <position position="64"/>
    </location>
</feature>
<feature type="modified residue" description="4-hydroxyproline" evidence="1">
    <location>
        <position position="67"/>
    </location>
</feature>
<feature type="modified residue" description="Cysteine amide" evidence="3">
    <location>
        <position position="71"/>
    </location>
</feature>
<feature type="disulfide bond" evidence="2">
    <location>
        <begin position="53"/>
        <end position="65"/>
    </location>
</feature>
<feature type="disulfide bond" evidence="2">
    <location>
        <begin position="54"/>
        <end position="70"/>
    </location>
</feature>
<feature type="disulfide bond" evidence="2">
    <location>
        <begin position="60"/>
        <end position="71"/>
    </location>
</feature>
<name>CM31_CONTU</name>
<proteinExistence type="evidence at transcript level"/>
<comment type="function">
    <text evidence="1 5">Mu-conotoxins block voltage-gated sodium channels (Nav) (By similarity). In vitro, this synthetic peptide displays a low blocking effect in mouse extensor digitorum longus muscles (IC(50)=616 nM).</text>
</comment>
<comment type="subcellular location">
    <subcellularLocation>
        <location evidence="1">Secreted</location>
    </subcellularLocation>
</comment>
<comment type="tissue specificity">
    <text>Expressed by the venom duct.</text>
</comment>
<comment type="domain">
    <text>The cysteine framework is III (CC-C-C-CC). Classified in the M-4 branch, since 4 residues stand between the fourth and the fifth cysteine residues.</text>
</comment>
<comment type="similarity">
    <text evidence="6">Belongs to the conotoxin M superfamily.</text>
</comment>
<sequence length="74" mass="8269">MSKLGVLLTICLLLFPLTALPMDGDEPADRPAERMQDNISSEQHPLFEERHGCCKGPEGCSSRECRPQHCCGRR</sequence>
<accession>P0DKQ9</accession>
<evidence type="ECO:0000250" key="1"/>
<evidence type="ECO:0000250" key="2">
    <source>
        <dbReference type="UniProtKB" id="P01523"/>
    </source>
</evidence>
<evidence type="ECO:0000250" key="3">
    <source>
        <dbReference type="UniProtKB" id="P0C350"/>
    </source>
</evidence>
<evidence type="ECO:0000255" key="4"/>
<evidence type="ECO:0000269" key="5">
    <source>
    </source>
</evidence>
<evidence type="ECO:0000305" key="6"/>
<reference key="1">
    <citation type="patent" date="2004-04-27" number="US6727226">
        <title>Mu-conopeptides.</title>
        <authorList>
            <person name="Olivera B.M."/>
            <person name="McIntosh M.J."/>
            <person name="Garrett J.E."/>
            <person name="Cruz L.J."/>
            <person name="Jones R.M."/>
            <person name="Cartier G.E."/>
            <person name="Wagstaff J.D."/>
        </authorList>
    </citation>
    <scope>NUCLEOTIDE SEQUENCE</scope>
</reference>
<reference key="2">
    <citation type="journal article" date="2012" name="Br. J. Pharmacol.">
        <title>A novel u-conopeptide, CnIIIC, exerts potent and preferential inhibition of NaV1.2/1.4 channels and blocks neuronal nicotinic acetylcholine receptors.</title>
        <authorList>
            <person name="Favreau P."/>
            <person name="Benoit E."/>
            <person name="Hocking H.G."/>
            <person name="Carlier L."/>
            <person name="D'Hoedt D."/>
            <person name="Leipold E."/>
            <person name="Markgraf R."/>
            <person name="Schlumberger S."/>
            <person name="Cordova M.A."/>
            <person name="Gaertner H."/>
            <person name="Paolini-Bertrand M."/>
            <person name="Hartley O."/>
            <person name="Tytgat J."/>
            <person name="Heinemann S.H."/>
            <person name="Bertrand D."/>
            <person name="Boelens R."/>
            <person name="Stocklin R."/>
            <person name="Molgo J."/>
        </authorList>
    </citation>
    <scope>FUNCTION</scope>
    <scope>SYNTHESIS</scope>
</reference>